<reference key="1">
    <citation type="submission" date="2006-02" db="EMBL/GenBank/DDBJ databases">
        <title>Complete sequence of chromosome of Rhodoferax ferrireducens DSM 15236.</title>
        <authorList>
            <person name="Copeland A."/>
            <person name="Lucas S."/>
            <person name="Lapidus A."/>
            <person name="Barry K."/>
            <person name="Detter J.C."/>
            <person name="Glavina del Rio T."/>
            <person name="Hammon N."/>
            <person name="Israni S."/>
            <person name="Pitluck S."/>
            <person name="Brettin T."/>
            <person name="Bruce D."/>
            <person name="Han C."/>
            <person name="Tapia R."/>
            <person name="Gilna P."/>
            <person name="Kiss H."/>
            <person name="Schmutz J."/>
            <person name="Larimer F."/>
            <person name="Land M."/>
            <person name="Kyrpides N."/>
            <person name="Ivanova N."/>
            <person name="Richardson P."/>
        </authorList>
    </citation>
    <scope>NUCLEOTIDE SEQUENCE [LARGE SCALE GENOMIC DNA]</scope>
    <source>
        <strain>ATCC BAA-621 / DSM 15236 / T118</strain>
    </source>
</reference>
<accession>Q21W32</accession>
<organism>
    <name type="scientific">Albidiferax ferrireducens (strain ATCC BAA-621 / DSM 15236 / T118)</name>
    <name type="common">Rhodoferax ferrireducens</name>
    <dbReference type="NCBI Taxonomy" id="338969"/>
    <lineage>
        <taxon>Bacteria</taxon>
        <taxon>Pseudomonadati</taxon>
        <taxon>Pseudomonadota</taxon>
        <taxon>Betaproteobacteria</taxon>
        <taxon>Burkholderiales</taxon>
        <taxon>Comamonadaceae</taxon>
        <taxon>Rhodoferax</taxon>
    </lineage>
</organism>
<sequence length="447" mass="49120">MKPVVALVGRPNVGKSTLFNRLTKSRDAIVADFAGLTRDRHYGNAKQGKHEFIVIDTGGFEPDAAGGIFKEMAKQTTQAVAEADVVIFVVDAREGISAQDHEIAKYLRRLGKPCVLAANKAEGMLAGAQLVEFFELGLGEVHAISAAHGQGIRTLVDLALAPLHLEDQDDADEQREPGIIKLAVAGRPNVGKSTLINTWLGEERLVAFDLPGTTRDAISVPFERNGQKFELVDTAGLRRRGKVFEAIEKFSVVKTLQAIESSNVVLLLIDATQGVTDQDAHIAGYILENGRAVVIAVNKWDAVDEYQRELVKRSIETRLPFLKFATMHLISATKRQGLGPLWASIAQAYKAANCKMSTPILTRLLLEAVQFQSPKRSGMFRPKLRYAHQGGMNPPVIIIHGNSLEHVTDAYKRFLEGRFRKEFDLVGTPMRIEFKSSTNPYADKATA</sequence>
<gene>
    <name evidence="1" type="primary">der</name>
    <name type="synonym">engA</name>
    <name type="ordered locus">Rfer_2303</name>
</gene>
<feature type="chain" id="PRO_1000011715" description="GTPase Der">
    <location>
        <begin position="1"/>
        <end position="447"/>
    </location>
</feature>
<feature type="domain" description="EngA-type G 1">
    <location>
        <begin position="3"/>
        <end position="167"/>
    </location>
</feature>
<feature type="domain" description="EngA-type G 2">
    <location>
        <begin position="180"/>
        <end position="353"/>
    </location>
</feature>
<feature type="domain" description="KH-like" evidence="1">
    <location>
        <begin position="354"/>
        <end position="438"/>
    </location>
</feature>
<feature type="binding site" evidence="1">
    <location>
        <begin position="9"/>
        <end position="16"/>
    </location>
    <ligand>
        <name>GTP</name>
        <dbReference type="ChEBI" id="CHEBI:37565"/>
        <label>1</label>
    </ligand>
</feature>
<feature type="binding site" evidence="1">
    <location>
        <begin position="56"/>
        <end position="60"/>
    </location>
    <ligand>
        <name>GTP</name>
        <dbReference type="ChEBI" id="CHEBI:37565"/>
        <label>1</label>
    </ligand>
</feature>
<feature type="binding site" evidence="1">
    <location>
        <begin position="119"/>
        <end position="122"/>
    </location>
    <ligand>
        <name>GTP</name>
        <dbReference type="ChEBI" id="CHEBI:37565"/>
        <label>1</label>
    </ligand>
</feature>
<feature type="binding site" evidence="1">
    <location>
        <begin position="186"/>
        <end position="193"/>
    </location>
    <ligand>
        <name>GTP</name>
        <dbReference type="ChEBI" id="CHEBI:37565"/>
        <label>2</label>
    </ligand>
</feature>
<feature type="binding site" evidence="1">
    <location>
        <begin position="233"/>
        <end position="237"/>
    </location>
    <ligand>
        <name>GTP</name>
        <dbReference type="ChEBI" id="CHEBI:37565"/>
        <label>2</label>
    </ligand>
</feature>
<feature type="binding site" evidence="1">
    <location>
        <begin position="298"/>
        <end position="301"/>
    </location>
    <ligand>
        <name>GTP</name>
        <dbReference type="ChEBI" id="CHEBI:37565"/>
        <label>2</label>
    </ligand>
</feature>
<dbReference type="EMBL" id="CP000267">
    <property type="protein sequence ID" value="ABD70021.1"/>
    <property type="molecule type" value="Genomic_DNA"/>
</dbReference>
<dbReference type="RefSeq" id="WP_011464589.1">
    <property type="nucleotide sequence ID" value="NC_007908.1"/>
</dbReference>
<dbReference type="SMR" id="Q21W32"/>
<dbReference type="STRING" id="338969.Rfer_2303"/>
<dbReference type="KEGG" id="rfr:Rfer_2303"/>
<dbReference type="eggNOG" id="COG1160">
    <property type="taxonomic scope" value="Bacteria"/>
</dbReference>
<dbReference type="HOGENOM" id="CLU_016077_6_2_4"/>
<dbReference type="OrthoDB" id="9805918at2"/>
<dbReference type="Proteomes" id="UP000008332">
    <property type="component" value="Chromosome"/>
</dbReference>
<dbReference type="GO" id="GO:0005525">
    <property type="term" value="F:GTP binding"/>
    <property type="evidence" value="ECO:0007669"/>
    <property type="project" value="UniProtKB-UniRule"/>
</dbReference>
<dbReference type="GO" id="GO:0043022">
    <property type="term" value="F:ribosome binding"/>
    <property type="evidence" value="ECO:0007669"/>
    <property type="project" value="TreeGrafter"/>
</dbReference>
<dbReference type="GO" id="GO:0042254">
    <property type="term" value="P:ribosome biogenesis"/>
    <property type="evidence" value="ECO:0007669"/>
    <property type="project" value="UniProtKB-KW"/>
</dbReference>
<dbReference type="CDD" id="cd01894">
    <property type="entry name" value="EngA1"/>
    <property type="match status" value="1"/>
</dbReference>
<dbReference type="CDD" id="cd01895">
    <property type="entry name" value="EngA2"/>
    <property type="match status" value="1"/>
</dbReference>
<dbReference type="FunFam" id="3.40.50.300:FF:000040">
    <property type="entry name" value="GTPase Der"/>
    <property type="match status" value="1"/>
</dbReference>
<dbReference type="FunFam" id="3.40.50.300:FF:000057">
    <property type="entry name" value="GTPase Der"/>
    <property type="match status" value="1"/>
</dbReference>
<dbReference type="Gene3D" id="3.30.300.20">
    <property type="match status" value="1"/>
</dbReference>
<dbReference type="Gene3D" id="3.40.50.300">
    <property type="entry name" value="P-loop containing nucleotide triphosphate hydrolases"/>
    <property type="match status" value="2"/>
</dbReference>
<dbReference type="HAMAP" id="MF_00195">
    <property type="entry name" value="GTPase_Der"/>
    <property type="match status" value="1"/>
</dbReference>
<dbReference type="InterPro" id="IPR031166">
    <property type="entry name" value="G_ENGA"/>
</dbReference>
<dbReference type="InterPro" id="IPR006073">
    <property type="entry name" value="GTP-bd"/>
</dbReference>
<dbReference type="InterPro" id="IPR016484">
    <property type="entry name" value="GTPase_Der"/>
</dbReference>
<dbReference type="InterPro" id="IPR032859">
    <property type="entry name" value="KH_dom-like"/>
</dbReference>
<dbReference type="InterPro" id="IPR015946">
    <property type="entry name" value="KH_dom-like_a/b"/>
</dbReference>
<dbReference type="InterPro" id="IPR027417">
    <property type="entry name" value="P-loop_NTPase"/>
</dbReference>
<dbReference type="InterPro" id="IPR005225">
    <property type="entry name" value="Small_GTP-bd"/>
</dbReference>
<dbReference type="NCBIfam" id="TIGR03594">
    <property type="entry name" value="GTPase_EngA"/>
    <property type="match status" value="1"/>
</dbReference>
<dbReference type="NCBIfam" id="TIGR00231">
    <property type="entry name" value="small_GTP"/>
    <property type="match status" value="2"/>
</dbReference>
<dbReference type="PANTHER" id="PTHR43834">
    <property type="entry name" value="GTPASE DER"/>
    <property type="match status" value="1"/>
</dbReference>
<dbReference type="PANTHER" id="PTHR43834:SF6">
    <property type="entry name" value="GTPASE DER"/>
    <property type="match status" value="1"/>
</dbReference>
<dbReference type="Pfam" id="PF14714">
    <property type="entry name" value="KH_dom-like"/>
    <property type="match status" value="1"/>
</dbReference>
<dbReference type="Pfam" id="PF01926">
    <property type="entry name" value="MMR_HSR1"/>
    <property type="match status" value="2"/>
</dbReference>
<dbReference type="PIRSF" id="PIRSF006485">
    <property type="entry name" value="GTP-binding_EngA"/>
    <property type="match status" value="1"/>
</dbReference>
<dbReference type="PRINTS" id="PR00326">
    <property type="entry name" value="GTP1OBG"/>
</dbReference>
<dbReference type="SUPFAM" id="SSF52540">
    <property type="entry name" value="P-loop containing nucleoside triphosphate hydrolases"/>
    <property type="match status" value="2"/>
</dbReference>
<dbReference type="PROSITE" id="PS51712">
    <property type="entry name" value="G_ENGA"/>
    <property type="match status" value="2"/>
</dbReference>
<proteinExistence type="inferred from homology"/>
<keyword id="KW-0342">GTP-binding</keyword>
<keyword id="KW-0547">Nucleotide-binding</keyword>
<keyword id="KW-1185">Reference proteome</keyword>
<keyword id="KW-0677">Repeat</keyword>
<keyword id="KW-0690">Ribosome biogenesis</keyword>
<comment type="function">
    <text evidence="1">GTPase that plays an essential role in the late steps of ribosome biogenesis.</text>
</comment>
<comment type="subunit">
    <text evidence="1">Associates with the 50S ribosomal subunit.</text>
</comment>
<comment type="similarity">
    <text evidence="1">Belongs to the TRAFAC class TrmE-Era-EngA-EngB-Septin-like GTPase superfamily. EngA (Der) GTPase family.</text>
</comment>
<evidence type="ECO:0000255" key="1">
    <source>
        <dbReference type="HAMAP-Rule" id="MF_00195"/>
    </source>
</evidence>
<protein>
    <recommendedName>
        <fullName evidence="1">GTPase Der</fullName>
    </recommendedName>
    <alternativeName>
        <fullName evidence="1">GTP-binding protein EngA</fullName>
    </alternativeName>
</protein>
<name>DER_ALBFT</name>